<proteinExistence type="evidence at transcript level"/>
<evidence type="ECO:0000250" key="1"/>
<evidence type="ECO:0000255" key="2">
    <source>
        <dbReference type="PROSITE-ProRule" id="PRU01210"/>
    </source>
</evidence>
<evidence type="ECO:0000305" key="3"/>
<reference key="1">
    <citation type="journal article" date="2012" name="PLoS ONE">
        <title>Identification and phylogenetic analysis of Tityus pachyurus and Tityus obscurus novel putative Na+-channel scorpion toxins.</title>
        <authorList>
            <person name="Guerrero-Vargas J.A."/>
            <person name="Mourao C.B."/>
            <person name="Quintero-Hernandez V."/>
            <person name="Possani L.D."/>
            <person name="Schwartz E.F."/>
        </authorList>
    </citation>
    <scope>NUCLEOTIDE SEQUENCE [MRNA]</scope>
    <scope>NOMENCLATURE</scope>
    <source>
        <tissue>Venom gland</tissue>
    </source>
</reference>
<protein>
    <recommendedName>
        <fullName>Toxin To8</fullName>
    </recommendedName>
    <alternativeName>
        <fullName>PT-beta* NaTx10.1</fullName>
    </alternativeName>
</protein>
<keyword id="KW-0027">Amidation</keyword>
<keyword id="KW-1015">Disulfide bond</keyword>
<keyword id="KW-0872">Ion channel impairing toxin</keyword>
<keyword id="KW-0528">Neurotoxin</keyword>
<keyword id="KW-0964">Secreted</keyword>
<keyword id="KW-0732">Signal</keyword>
<keyword id="KW-0800">Toxin</keyword>
<keyword id="KW-0738">Voltage-gated sodium channel impairing toxin</keyword>
<organism>
    <name type="scientific">Tityus obscurus</name>
    <name type="common">Amazonian scorpion</name>
    <name type="synonym">Tityus cambridgei</name>
    <dbReference type="NCBI Taxonomy" id="1221240"/>
    <lineage>
        <taxon>Eukaryota</taxon>
        <taxon>Metazoa</taxon>
        <taxon>Ecdysozoa</taxon>
        <taxon>Arthropoda</taxon>
        <taxon>Chelicerata</taxon>
        <taxon>Arachnida</taxon>
        <taxon>Scorpiones</taxon>
        <taxon>Buthida</taxon>
        <taxon>Buthoidea</taxon>
        <taxon>Buthidae</taxon>
        <taxon>Tityus</taxon>
    </lineage>
</organism>
<accession>H1ZZH7</accession>
<comment type="function">
    <text evidence="1">Beta toxins bind voltage-independently at site-4 of sodium channels (Nav) and shift the voltage of activation toward more negative potentials thereby affecting sodium channel activation and promoting spontaneous and repetitive firing.</text>
</comment>
<comment type="subcellular location">
    <subcellularLocation>
        <location evidence="1">Secreted</location>
    </subcellularLocation>
</comment>
<comment type="tissue specificity">
    <text>Expressed by the venom gland.</text>
</comment>
<comment type="domain">
    <text evidence="3">Has the structural arrangement of an alpha-helix connected to antiparallel beta-sheets by disulfide bonds (CS-alpha/beta).</text>
</comment>
<comment type="similarity">
    <text evidence="3">Belongs to the long (4 C-C) scorpion toxin superfamily. Sodium channel inhibitor family. Beta subfamily.</text>
</comment>
<comment type="caution">
    <text evidence="3">The fragment sequence AC P84691 is identical to the sequence presented in this entry, but both peptides are probably different peptides, since the experimental molecular mass of AC P84691 does not correspond to theoretical mass of the peptide presented here.</text>
</comment>
<name>SCX8_TITOB</name>
<dbReference type="EMBL" id="HE585231">
    <property type="protein sequence ID" value="CCD31425.1"/>
    <property type="molecule type" value="mRNA"/>
</dbReference>
<dbReference type="SMR" id="H1ZZH7"/>
<dbReference type="GO" id="GO:0005576">
    <property type="term" value="C:extracellular region"/>
    <property type="evidence" value="ECO:0007669"/>
    <property type="project" value="UniProtKB-SubCell"/>
</dbReference>
<dbReference type="GO" id="GO:0019871">
    <property type="term" value="F:sodium channel inhibitor activity"/>
    <property type="evidence" value="ECO:0007669"/>
    <property type="project" value="InterPro"/>
</dbReference>
<dbReference type="GO" id="GO:0090729">
    <property type="term" value="F:toxin activity"/>
    <property type="evidence" value="ECO:0007669"/>
    <property type="project" value="UniProtKB-KW"/>
</dbReference>
<dbReference type="CDD" id="cd23106">
    <property type="entry name" value="neurotoxins_LC_scorpion"/>
    <property type="match status" value="1"/>
</dbReference>
<dbReference type="FunFam" id="3.30.30.10:FF:000002">
    <property type="entry name" value="Alpha-like toxin BmK-M1"/>
    <property type="match status" value="1"/>
</dbReference>
<dbReference type="Gene3D" id="3.30.30.10">
    <property type="entry name" value="Knottin, scorpion toxin-like"/>
    <property type="match status" value="1"/>
</dbReference>
<dbReference type="InterPro" id="IPR044062">
    <property type="entry name" value="LCN-type_CS_alpha_beta_dom"/>
</dbReference>
<dbReference type="InterPro" id="IPR036574">
    <property type="entry name" value="Scorpion_toxin-like_sf"/>
</dbReference>
<dbReference type="InterPro" id="IPR018218">
    <property type="entry name" value="Scorpion_toxinL"/>
</dbReference>
<dbReference type="InterPro" id="IPR002061">
    <property type="entry name" value="Scorpion_toxinL/defensin"/>
</dbReference>
<dbReference type="Pfam" id="PF00537">
    <property type="entry name" value="Toxin_3"/>
    <property type="match status" value="1"/>
</dbReference>
<dbReference type="PRINTS" id="PR00285">
    <property type="entry name" value="SCORPNTOXIN"/>
</dbReference>
<dbReference type="SUPFAM" id="SSF57095">
    <property type="entry name" value="Scorpion toxin-like"/>
    <property type="match status" value="1"/>
</dbReference>
<dbReference type="PROSITE" id="PS51863">
    <property type="entry name" value="LCN_CSAB"/>
    <property type="match status" value="1"/>
</dbReference>
<feature type="signal peptide" evidence="1">
    <location>
        <begin position="1"/>
        <end position="20"/>
    </location>
</feature>
<feature type="chain" id="PRO_5000851428" description="Toxin To8">
    <location>
        <begin position="21"/>
        <end position="82"/>
    </location>
</feature>
<feature type="domain" description="LCN-type CS-alpha/beta" evidence="2">
    <location>
        <begin position="21"/>
        <end position="83"/>
    </location>
</feature>
<feature type="modified residue" description="Cysteine amide" evidence="1">
    <location>
        <position position="82"/>
    </location>
</feature>
<feature type="disulfide bond" evidence="2">
    <location>
        <begin position="31"/>
        <end position="82"/>
    </location>
</feature>
<feature type="disulfide bond" evidence="2">
    <location>
        <begin position="35"/>
        <end position="57"/>
    </location>
</feature>
<feature type="disulfide bond" evidence="2">
    <location>
        <begin position="43"/>
        <end position="63"/>
    </location>
</feature>
<feature type="disulfide bond" evidence="2">
    <location>
        <begin position="47"/>
        <end position="65"/>
    </location>
</feature>
<sequence length="86" mass="9866">MTRFVLFISCFFLIGMVVECKEGYLLGSRGCKMNCLTRPEKFCELECSLVGGENGYCAYWLACYCYNVPESVKLWESDTNECGKRK</sequence>